<protein>
    <recommendedName>
        <fullName evidence="1">Uroporphyrinogen decarboxylase</fullName>
        <shortName evidence="1">UPD</shortName>
        <shortName evidence="1">URO-D</shortName>
        <ecNumber evidence="1">4.1.1.37</ecNumber>
    </recommendedName>
</protein>
<organism>
    <name type="scientific">Alkalilimnicola ehrlichii (strain ATCC BAA-1101 / DSM 17681 / MLHE-1)</name>
    <dbReference type="NCBI Taxonomy" id="187272"/>
    <lineage>
        <taxon>Bacteria</taxon>
        <taxon>Pseudomonadati</taxon>
        <taxon>Pseudomonadota</taxon>
        <taxon>Gammaproteobacteria</taxon>
        <taxon>Chromatiales</taxon>
        <taxon>Ectothiorhodospiraceae</taxon>
        <taxon>Alkalilimnicola</taxon>
    </lineage>
</organism>
<dbReference type="EC" id="4.1.1.37" evidence="1"/>
<dbReference type="EMBL" id="CP000453">
    <property type="protein sequence ID" value="ABI58105.1"/>
    <property type="molecule type" value="Genomic_DNA"/>
</dbReference>
<dbReference type="RefSeq" id="WP_011630498.1">
    <property type="nucleotide sequence ID" value="NC_008340.1"/>
</dbReference>
<dbReference type="SMR" id="Q0A4Y2"/>
<dbReference type="KEGG" id="aeh:Mlg_2765"/>
<dbReference type="eggNOG" id="COG0407">
    <property type="taxonomic scope" value="Bacteria"/>
</dbReference>
<dbReference type="HOGENOM" id="CLU_040933_0_0_6"/>
<dbReference type="OrthoDB" id="9806656at2"/>
<dbReference type="UniPathway" id="UPA00251">
    <property type="reaction ID" value="UER00321"/>
</dbReference>
<dbReference type="Proteomes" id="UP000001962">
    <property type="component" value="Chromosome"/>
</dbReference>
<dbReference type="GO" id="GO:0005829">
    <property type="term" value="C:cytosol"/>
    <property type="evidence" value="ECO:0007669"/>
    <property type="project" value="TreeGrafter"/>
</dbReference>
<dbReference type="GO" id="GO:0004853">
    <property type="term" value="F:uroporphyrinogen decarboxylase activity"/>
    <property type="evidence" value="ECO:0007669"/>
    <property type="project" value="UniProtKB-UniRule"/>
</dbReference>
<dbReference type="GO" id="GO:0019353">
    <property type="term" value="P:protoporphyrinogen IX biosynthetic process from glutamate"/>
    <property type="evidence" value="ECO:0007669"/>
    <property type="project" value="TreeGrafter"/>
</dbReference>
<dbReference type="CDD" id="cd00717">
    <property type="entry name" value="URO-D"/>
    <property type="match status" value="1"/>
</dbReference>
<dbReference type="FunFam" id="3.20.20.210:FF:000001">
    <property type="entry name" value="Uroporphyrinogen decarboxylase"/>
    <property type="match status" value="1"/>
</dbReference>
<dbReference type="Gene3D" id="3.20.20.210">
    <property type="match status" value="1"/>
</dbReference>
<dbReference type="HAMAP" id="MF_00218">
    <property type="entry name" value="URO_D"/>
    <property type="match status" value="1"/>
</dbReference>
<dbReference type="InterPro" id="IPR038071">
    <property type="entry name" value="UROD/MetE-like_sf"/>
</dbReference>
<dbReference type="InterPro" id="IPR006361">
    <property type="entry name" value="Uroporphyrinogen_deCO2ase_HemE"/>
</dbReference>
<dbReference type="InterPro" id="IPR000257">
    <property type="entry name" value="Uroporphyrinogen_deCOase"/>
</dbReference>
<dbReference type="NCBIfam" id="TIGR01464">
    <property type="entry name" value="hemE"/>
    <property type="match status" value="1"/>
</dbReference>
<dbReference type="PANTHER" id="PTHR21091">
    <property type="entry name" value="METHYLTETRAHYDROFOLATE:HOMOCYSTEINE METHYLTRANSFERASE RELATED"/>
    <property type="match status" value="1"/>
</dbReference>
<dbReference type="PANTHER" id="PTHR21091:SF169">
    <property type="entry name" value="UROPORPHYRINOGEN DECARBOXYLASE"/>
    <property type="match status" value="1"/>
</dbReference>
<dbReference type="Pfam" id="PF01208">
    <property type="entry name" value="URO-D"/>
    <property type="match status" value="1"/>
</dbReference>
<dbReference type="SUPFAM" id="SSF51726">
    <property type="entry name" value="UROD/MetE-like"/>
    <property type="match status" value="1"/>
</dbReference>
<dbReference type="PROSITE" id="PS00906">
    <property type="entry name" value="UROD_1"/>
    <property type="match status" value="1"/>
</dbReference>
<dbReference type="PROSITE" id="PS00907">
    <property type="entry name" value="UROD_2"/>
    <property type="match status" value="1"/>
</dbReference>
<reference key="1">
    <citation type="submission" date="2006-08" db="EMBL/GenBank/DDBJ databases">
        <title>Complete sequence of Alkalilimnicola ehrilichei MLHE-1.</title>
        <authorList>
            <person name="Copeland A."/>
            <person name="Lucas S."/>
            <person name="Lapidus A."/>
            <person name="Barry K."/>
            <person name="Detter J.C."/>
            <person name="Glavina del Rio T."/>
            <person name="Hammon N."/>
            <person name="Israni S."/>
            <person name="Dalin E."/>
            <person name="Tice H."/>
            <person name="Pitluck S."/>
            <person name="Sims D."/>
            <person name="Brettin T."/>
            <person name="Bruce D."/>
            <person name="Han C."/>
            <person name="Tapia R."/>
            <person name="Gilna P."/>
            <person name="Schmutz J."/>
            <person name="Larimer F."/>
            <person name="Land M."/>
            <person name="Hauser L."/>
            <person name="Kyrpides N."/>
            <person name="Mikhailova N."/>
            <person name="Oremland R.S."/>
            <person name="Hoeft S.E."/>
            <person name="Switzer-Blum J."/>
            <person name="Kulp T."/>
            <person name="King G."/>
            <person name="Tabita R."/>
            <person name="Witte B."/>
            <person name="Santini J.M."/>
            <person name="Basu P."/>
            <person name="Hollibaugh J.T."/>
            <person name="Xie G."/>
            <person name="Stolz J.F."/>
            <person name="Richardson P."/>
        </authorList>
    </citation>
    <scope>NUCLEOTIDE SEQUENCE [LARGE SCALE GENOMIC DNA]</scope>
    <source>
        <strain>ATCC BAA-1101 / DSM 17681 / MLHE-1</strain>
    </source>
</reference>
<accession>Q0A4Y2</accession>
<comment type="function">
    <text evidence="1">Catalyzes the decarboxylation of four acetate groups of uroporphyrinogen-III to yield coproporphyrinogen-III.</text>
</comment>
<comment type="catalytic activity">
    <reaction evidence="1">
        <text>uroporphyrinogen III + 4 H(+) = coproporphyrinogen III + 4 CO2</text>
        <dbReference type="Rhea" id="RHEA:19865"/>
        <dbReference type="ChEBI" id="CHEBI:15378"/>
        <dbReference type="ChEBI" id="CHEBI:16526"/>
        <dbReference type="ChEBI" id="CHEBI:57308"/>
        <dbReference type="ChEBI" id="CHEBI:57309"/>
        <dbReference type="EC" id="4.1.1.37"/>
    </reaction>
</comment>
<comment type="pathway">
    <text evidence="1">Porphyrin-containing compound metabolism; protoporphyrin-IX biosynthesis; coproporphyrinogen-III from 5-aminolevulinate: step 4/4.</text>
</comment>
<comment type="subunit">
    <text evidence="1">Homodimer.</text>
</comment>
<comment type="subcellular location">
    <subcellularLocation>
        <location evidence="1">Cytoplasm</location>
    </subcellularLocation>
</comment>
<comment type="similarity">
    <text evidence="1">Belongs to the uroporphyrinogen decarboxylase family.</text>
</comment>
<evidence type="ECO:0000255" key="1">
    <source>
        <dbReference type="HAMAP-Rule" id="MF_00218"/>
    </source>
</evidence>
<gene>
    <name evidence="1" type="primary">hemE</name>
    <name type="ordered locus">Mlg_2765</name>
</gene>
<proteinExistence type="inferred from homology"/>
<keyword id="KW-0963">Cytoplasm</keyword>
<keyword id="KW-0210">Decarboxylase</keyword>
<keyword id="KW-0456">Lyase</keyword>
<keyword id="KW-0627">Porphyrin biosynthesis</keyword>
<keyword id="KW-1185">Reference proteome</keyword>
<sequence length="365" mass="40238">MSVLKNDRLLRALQRQPVDRTPVWMMRQAGRYLPEYRELRAQAGSFMKLAGTPELACEVTLQPLRRFPLDAAILFSDILTIPDAMGLGLRFLPGEGPVFDHPVRSAADIEHLPVPDPEDELRYVTDAVRLIRRELDGEVPLIGFAGSPWTLATYMIEGGSSKDYRRCKAMLYDEPELLHRLLDKVAQATTAYLNAQIAAGAQAIMIFDSWGGALAHDAYRLFSLAYMERIVRNLTREADGRHVPVVLFTKGGGQWLEAMAATGCDGLGLDWTTNLGQARDRVGDRVALQGNLDPCVLYASPETIRNEVARVLADYGPGPGHVFNLGHGIHPAIPPEHAGAMIDAVHQLSPRYHEQQAEASSLTQG</sequence>
<name>DCUP_ALKEH</name>
<feature type="chain" id="PRO_1000023869" description="Uroporphyrinogen decarboxylase">
    <location>
        <begin position="1"/>
        <end position="365"/>
    </location>
</feature>
<feature type="binding site" evidence="1">
    <location>
        <begin position="27"/>
        <end position="31"/>
    </location>
    <ligand>
        <name>substrate</name>
    </ligand>
</feature>
<feature type="binding site" evidence="1">
    <location>
        <position position="77"/>
    </location>
    <ligand>
        <name>substrate</name>
    </ligand>
</feature>
<feature type="binding site" evidence="1">
    <location>
        <position position="154"/>
    </location>
    <ligand>
        <name>substrate</name>
    </ligand>
</feature>
<feature type="binding site" evidence="1">
    <location>
        <position position="209"/>
    </location>
    <ligand>
        <name>substrate</name>
    </ligand>
</feature>
<feature type="binding site" evidence="1">
    <location>
        <position position="327"/>
    </location>
    <ligand>
        <name>substrate</name>
    </ligand>
</feature>
<feature type="site" description="Transition state stabilizer" evidence="1">
    <location>
        <position position="77"/>
    </location>
</feature>